<feature type="chain" id="PRO_1000045280" description="Probable transcriptional regulatory protein Bcen2424_2294">
    <location>
        <begin position="1"/>
        <end position="242"/>
    </location>
</feature>
<gene>
    <name type="ordered locus">Bcen2424_2294</name>
</gene>
<sequence>MAGHSKWANIKHKKAAADAKRGKIWTRLIKEIQVAARLGGGDVNSNPRLRLAVDKAADANMPKDNVKRAIDRGVGGADGANYEEIRYEGYGISGAAIIVDTLTDNRTRTVAEVRHAFSKFGGNMGTDGSVAFMFDHVGQFLFAPGTSEDALMEAALEAGANDVNTNDDGSIEVLCDWQAFSAVKDALEAAGFKAELAEVTMKPQNEVEFTGDDAAKMQKLLDALENLDDVQDVYTNAVIVEE</sequence>
<protein>
    <recommendedName>
        <fullName evidence="1">Probable transcriptional regulatory protein Bcen2424_2294</fullName>
    </recommendedName>
</protein>
<proteinExistence type="inferred from homology"/>
<reference key="1">
    <citation type="submission" date="2006-08" db="EMBL/GenBank/DDBJ databases">
        <title>Complete sequence of chromosome 1 of Burkholderia cenocepacia HI2424.</title>
        <authorList>
            <person name="Copeland A."/>
            <person name="Lucas S."/>
            <person name="Lapidus A."/>
            <person name="Barry K."/>
            <person name="Detter J.C."/>
            <person name="Glavina del Rio T."/>
            <person name="Hammon N."/>
            <person name="Israni S."/>
            <person name="Pitluck S."/>
            <person name="Chain P."/>
            <person name="Malfatti S."/>
            <person name="Shin M."/>
            <person name="Vergez L."/>
            <person name="Schmutz J."/>
            <person name="Larimer F."/>
            <person name="Land M."/>
            <person name="Hauser L."/>
            <person name="Kyrpides N."/>
            <person name="Kim E."/>
            <person name="LiPuma J.J."/>
            <person name="Gonzalez C.F."/>
            <person name="Konstantinidis K."/>
            <person name="Tiedje J.M."/>
            <person name="Richardson P."/>
        </authorList>
    </citation>
    <scope>NUCLEOTIDE SEQUENCE [LARGE SCALE GENOMIC DNA]</scope>
    <source>
        <strain>HI2424</strain>
    </source>
</reference>
<comment type="subcellular location">
    <subcellularLocation>
        <location evidence="1">Cytoplasm</location>
    </subcellularLocation>
</comment>
<comment type="similarity">
    <text evidence="1">Belongs to the TACO1 family.</text>
</comment>
<organism>
    <name type="scientific">Burkholderia cenocepacia (strain HI2424)</name>
    <dbReference type="NCBI Taxonomy" id="331272"/>
    <lineage>
        <taxon>Bacteria</taxon>
        <taxon>Pseudomonadati</taxon>
        <taxon>Pseudomonadota</taxon>
        <taxon>Betaproteobacteria</taxon>
        <taxon>Burkholderiales</taxon>
        <taxon>Burkholderiaceae</taxon>
        <taxon>Burkholderia</taxon>
        <taxon>Burkholderia cepacia complex</taxon>
    </lineage>
</organism>
<keyword id="KW-0963">Cytoplasm</keyword>
<keyword id="KW-0238">DNA-binding</keyword>
<keyword id="KW-0804">Transcription</keyword>
<keyword id="KW-0805">Transcription regulation</keyword>
<name>Y2294_BURCH</name>
<dbReference type="EMBL" id="CP000458">
    <property type="protein sequence ID" value="ABK09045.1"/>
    <property type="molecule type" value="Genomic_DNA"/>
</dbReference>
<dbReference type="RefSeq" id="WP_006478227.1">
    <property type="nucleotide sequence ID" value="NC_008542.1"/>
</dbReference>
<dbReference type="SMR" id="A0K968"/>
<dbReference type="KEGG" id="bch:Bcen2424_2294"/>
<dbReference type="HOGENOM" id="CLU_062974_2_2_4"/>
<dbReference type="GO" id="GO:0005829">
    <property type="term" value="C:cytosol"/>
    <property type="evidence" value="ECO:0007669"/>
    <property type="project" value="TreeGrafter"/>
</dbReference>
<dbReference type="GO" id="GO:0003677">
    <property type="term" value="F:DNA binding"/>
    <property type="evidence" value="ECO:0007669"/>
    <property type="project" value="UniProtKB-UniRule"/>
</dbReference>
<dbReference type="GO" id="GO:0006355">
    <property type="term" value="P:regulation of DNA-templated transcription"/>
    <property type="evidence" value="ECO:0007669"/>
    <property type="project" value="UniProtKB-UniRule"/>
</dbReference>
<dbReference type="FunFam" id="1.10.10.200:FF:000001">
    <property type="entry name" value="Probable transcriptional regulatory protein YebC"/>
    <property type="match status" value="1"/>
</dbReference>
<dbReference type="FunFam" id="3.30.70.980:FF:000002">
    <property type="entry name" value="Probable transcriptional regulatory protein YebC"/>
    <property type="match status" value="1"/>
</dbReference>
<dbReference type="Gene3D" id="1.10.10.200">
    <property type="match status" value="1"/>
</dbReference>
<dbReference type="Gene3D" id="3.30.70.980">
    <property type="match status" value="2"/>
</dbReference>
<dbReference type="HAMAP" id="MF_00693">
    <property type="entry name" value="Transcrip_reg_TACO1"/>
    <property type="match status" value="1"/>
</dbReference>
<dbReference type="InterPro" id="IPR017856">
    <property type="entry name" value="Integrase-like_N"/>
</dbReference>
<dbReference type="InterPro" id="IPR048300">
    <property type="entry name" value="TACO1_YebC-like_2nd/3rd_dom"/>
</dbReference>
<dbReference type="InterPro" id="IPR049083">
    <property type="entry name" value="TACO1_YebC_N"/>
</dbReference>
<dbReference type="InterPro" id="IPR002876">
    <property type="entry name" value="Transcrip_reg_TACO1-like"/>
</dbReference>
<dbReference type="InterPro" id="IPR026564">
    <property type="entry name" value="Transcrip_reg_TACO1-like_dom3"/>
</dbReference>
<dbReference type="InterPro" id="IPR029072">
    <property type="entry name" value="YebC-like"/>
</dbReference>
<dbReference type="NCBIfam" id="NF001030">
    <property type="entry name" value="PRK00110.1"/>
    <property type="match status" value="1"/>
</dbReference>
<dbReference type="NCBIfam" id="NF009044">
    <property type="entry name" value="PRK12378.1"/>
    <property type="match status" value="1"/>
</dbReference>
<dbReference type="NCBIfam" id="TIGR01033">
    <property type="entry name" value="YebC/PmpR family DNA-binding transcriptional regulator"/>
    <property type="match status" value="1"/>
</dbReference>
<dbReference type="PANTHER" id="PTHR12532:SF6">
    <property type="entry name" value="TRANSCRIPTIONAL REGULATORY PROTEIN YEBC-RELATED"/>
    <property type="match status" value="1"/>
</dbReference>
<dbReference type="PANTHER" id="PTHR12532">
    <property type="entry name" value="TRANSLATIONAL ACTIVATOR OF CYTOCHROME C OXIDASE 1"/>
    <property type="match status" value="1"/>
</dbReference>
<dbReference type="Pfam" id="PF20772">
    <property type="entry name" value="TACO1_YebC_N"/>
    <property type="match status" value="1"/>
</dbReference>
<dbReference type="Pfam" id="PF01709">
    <property type="entry name" value="Transcrip_reg"/>
    <property type="match status" value="1"/>
</dbReference>
<dbReference type="SUPFAM" id="SSF75625">
    <property type="entry name" value="YebC-like"/>
    <property type="match status" value="1"/>
</dbReference>
<accession>A0K968</accession>
<evidence type="ECO:0000255" key="1">
    <source>
        <dbReference type="HAMAP-Rule" id="MF_00693"/>
    </source>
</evidence>